<evidence type="ECO:0000255" key="1">
    <source>
        <dbReference type="HAMAP-Rule" id="MF_01177"/>
    </source>
</evidence>
<gene>
    <name evidence="1" type="primary">nsrR</name>
    <name type="ordered locus">EFER_4231</name>
</gene>
<keyword id="KW-0001">2Fe-2S</keyword>
<keyword id="KW-0238">DNA-binding</keyword>
<keyword id="KW-0408">Iron</keyword>
<keyword id="KW-0411">Iron-sulfur</keyword>
<keyword id="KW-0479">Metal-binding</keyword>
<keyword id="KW-0678">Repressor</keyword>
<keyword id="KW-0804">Transcription</keyword>
<keyword id="KW-0805">Transcription regulation</keyword>
<comment type="function">
    <text evidence="1">Nitric oxide-sensitive repressor of genes involved in protecting the cell against nitrosative stress. May require iron for activity.</text>
</comment>
<comment type="cofactor">
    <cofactor evidence="1">
        <name>[2Fe-2S] cluster</name>
        <dbReference type="ChEBI" id="CHEBI:190135"/>
    </cofactor>
    <text evidence="1">Binds 1 [2Fe-2S] cluster per subunit.</text>
</comment>
<proteinExistence type="inferred from homology"/>
<accession>B7LLW0</accession>
<name>NSRR_ESCF3</name>
<feature type="chain" id="PRO_1000138123" description="HTH-type transcriptional repressor NsrR">
    <location>
        <begin position="1"/>
        <end position="141"/>
    </location>
</feature>
<feature type="domain" description="HTH rrf2-type" evidence="1">
    <location>
        <begin position="2"/>
        <end position="129"/>
    </location>
</feature>
<feature type="DNA-binding region" description="H-T-H motif" evidence="1">
    <location>
        <begin position="28"/>
        <end position="51"/>
    </location>
</feature>
<feature type="binding site" evidence="1">
    <location>
        <position position="91"/>
    </location>
    <ligand>
        <name>[2Fe-2S] cluster</name>
        <dbReference type="ChEBI" id="CHEBI:190135"/>
    </ligand>
</feature>
<feature type="binding site" evidence="1">
    <location>
        <position position="96"/>
    </location>
    <ligand>
        <name>[2Fe-2S] cluster</name>
        <dbReference type="ChEBI" id="CHEBI:190135"/>
    </ligand>
</feature>
<feature type="binding site" evidence="1">
    <location>
        <position position="102"/>
    </location>
    <ligand>
        <name>[2Fe-2S] cluster</name>
        <dbReference type="ChEBI" id="CHEBI:190135"/>
    </ligand>
</feature>
<sequence>MQLTSFTDYGLRALIYMASLPEGRMTSISEVTDVYGVSRNHMVKIINQLSRAGYVTAVRGKNGGIRLGKPASAIRIGDVVRELEPLSLVNCSSEFCHITPACRLKQALSKAVQSFLMELDNYTLADLVEENQPLYKLLLVE</sequence>
<protein>
    <recommendedName>
        <fullName evidence="1">HTH-type transcriptional repressor NsrR</fullName>
    </recommendedName>
</protein>
<dbReference type="EMBL" id="CU928158">
    <property type="protein sequence ID" value="CAQ91650.1"/>
    <property type="molecule type" value="Genomic_DNA"/>
</dbReference>
<dbReference type="RefSeq" id="WP_001177637.1">
    <property type="nucleotide sequence ID" value="NC_011740.1"/>
</dbReference>
<dbReference type="SMR" id="B7LLW0"/>
<dbReference type="GeneID" id="75059181"/>
<dbReference type="KEGG" id="efe:EFER_4231"/>
<dbReference type="HOGENOM" id="CLU_107144_2_1_6"/>
<dbReference type="OrthoDB" id="9795923at2"/>
<dbReference type="Proteomes" id="UP000000745">
    <property type="component" value="Chromosome"/>
</dbReference>
<dbReference type="GO" id="GO:0005829">
    <property type="term" value="C:cytosol"/>
    <property type="evidence" value="ECO:0007669"/>
    <property type="project" value="TreeGrafter"/>
</dbReference>
<dbReference type="GO" id="GO:0051537">
    <property type="term" value="F:2 iron, 2 sulfur cluster binding"/>
    <property type="evidence" value="ECO:0007669"/>
    <property type="project" value="UniProtKB-KW"/>
</dbReference>
<dbReference type="GO" id="GO:0003700">
    <property type="term" value="F:DNA-binding transcription factor activity"/>
    <property type="evidence" value="ECO:0007669"/>
    <property type="project" value="UniProtKB-UniRule"/>
</dbReference>
<dbReference type="GO" id="GO:0003690">
    <property type="term" value="F:double-stranded DNA binding"/>
    <property type="evidence" value="ECO:0007669"/>
    <property type="project" value="UniProtKB-UniRule"/>
</dbReference>
<dbReference type="GO" id="GO:0005506">
    <property type="term" value="F:iron ion binding"/>
    <property type="evidence" value="ECO:0007669"/>
    <property type="project" value="UniProtKB-UniRule"/>
</dbReference>
<dbReference type="GO" id="GO:0045892">
    <property type="term" value="P:negative regulation of DNA-templated transcription"/>
    <property type="evidence" value="ECO:0007669"/>
    <property type="project" value="InterPro"/>
</dbReference>
<dbReference type="FunFam" id="1.10.10.10:FF:000105">
    <property type="entry name" value="HTH-type transcriptional repressor NsrR"/>
    <property type="match status" value="1"/>
</dbReference>
<dbReference type="Gene3D" id="1.10.10.10">
    <property type="entry name" value="Winged helix-like DNA-binding domain superfamily/Winged helix DNA-binding domain"/>
    <property type="match status" value="1"/>
</dbReference>
<dbReference type="HAMAP" id="MF_01177">
    <property type="entry name" value="HTH_type_NsrR"/>
    <property type="match status" value="1"/>
</dbReference>
<dbReference type="InterPro" id="IPR030489">
    <property type="entry name" value="TR_Rrf2-type_CS"/>
</dbReference>
<dbReference type="InterPro" id="IPR000944">
    <property type="entry name" value="Tscrpt_reg_Rrf2"/>
</dbReference>
<dbReference type="InterPro" id="IPR023761">
    <property type="entry name" value="Tscrpt_rep_HTH_NsrR"/>
</dbReference>
<dbReference type="InterPro" id="IPR036388">
    <property type="entry name" value="WH-like_DNA-bd_sf"/>
</dbReference>
<dbReference type="InterPro" id="IPR036390">
    <property type="entry name" value="WH_DNA-bd_sf"/>
</dbReference>
<dbReference type="NCBIfam" id="NF008240">
    <property type="entry name" value="PRK11014.1"/>
    <property type="match status" value="1"/>
</dbReference>
<dbReference type="NCBIfam" id="TIGR00738">
    <property type="entry name" value="rrf2_super"/>
    <property type="match status" value="1"/>
</dbReference>
<dbReference type="PANTHER" id="PTHR33221:SF4">
    <property type="entry name" value="HTH-TYPE TRANSCRIPTIONAL REPRESSOR NSRR"/>
    <property type="match status" value="1"/>
</dbReference>
<dbReference type="PANTHER" id="PTHR33221">
    <property type="entry name" value="WINGED HELIX-TURN-HELIX TRANSCRIPTIONAL REGULATOR, RRF2 FAMILY"/>
    <property type="match status" value="1"/>
</dbReference>
<dbReference type="Pfam" id="PF02082">
    <property type="entry name" value="Rrf2"/>
    <property type="match status" value="1"/>
</dbReference>
<dbReference type="SUPFAM" id="SSF46785">
    <property type="entry name" value="Winged helix' DNA-binding domain"/>
    <property type="match status" value="1"/>
</dbReference>
<dbReference type="PROSITE" id="PS01332">
    <property type="entry name" value="HTH_RRF2_1"/>
    <property type="match status" value="1"/>
</dbReference>
<dbReference type="PROSITE" id="PS51197">
    <property type="entry name" value="HTH_RRF2_2"/>
    <property type="match status" value="1"/>
</dbReference>
<reference key="1">
    <citation type="journal article" date="2009" name="PLoS Genet.">
        <title>Organised genome dynamics in the Escherichia coli species results in highly diverse adaptive paths.</title>
        <authorList>
            <person name="Touchon M."/>
            <person name="Hoede C."/>
            <person name="Tenaillon O."/>
            <person name="Barbe V."/>
            <person name="Baeriswyl S."/>
            <person name="Bidet P."/>
            <person name="Bingen E."/>
            <person name="Bonacorsi S."/>
            <person name="Bouchier C."/>
            <person name="Bouvet O."/>
            <person name="Calteau A."/>
            <person name="Chiapello H."/>
            <person name="Clermont O."/>
            <person name="Cruveiller S."/>
            <person name="Danchin A."/>
            <person name="Diard M."/>
            <person name="Dossat C."/>
            <person name="Karoui M.E."/>
            <person name="Frapy E."/>
            <person name="Garry L."/>
            <person name="Ghigo J.M."/>
            <person name="Gilles A.M."/>
            <person name="Johnson J."/>
            <person name="Le Bouguenec C."/>
            <person name="Lescat M."/>
            <person name="Mangenot S."/>
            <person name="Martinez-Jehanne V."/>
            <person name="Matic I."/>
            <person name="Nassif X."/>
            <person name="Oztas S."/>
            <person name="Petit M.A."/>
            <person name="Pichon C."/>
            <person name="Rouy Z."/>
            <person name="Ruf C.S."/>
            <person name="Schneider D."/>
            <person name="Tourret J."/>
            <person name="Vacherie B."/>
            <person name="Vallenet D."/>
            <person name="Medigue C."/>
            <person name="Rocha E.P.C."/>
            <person name="Denamur E."/>
        </authorList>
    </citation>
    <scope>NUCLEOTIDE SEQUENCE [LARGE SCALE GENOMIC DNA]</scope>
    <source>
        <strain>ATCC 35469 / DSM 13698 / BCRC 15582 / CCUG 18766 / IAM 14443 / JCM 21226 / LMG 7866 / NBRC 102419 / NCTC 12128 / CDC 0568-73</strain>
    </source>
</reference>
<organism>
    <name type="scientific">Escherichia fergusonii (strain ATCC 35469 / DSM 13698 / CCUG 18766 / IAM 14443 / JCM 21226 / LMG 7866 / NBRC 102419 / NCTC 12128 / CDC 0568-73)</name>
    <dbReference type="NCBI Taxonomy" id="585054"/>
    <lineage>
        <taxon>Bacteria</taxon>
        <taxon>Pseudomonadati</taxon>
        <taxon>Pseudomonadota</taxon>
        <taxon>Gammaproteobacteria</taxon>
        <taxon>Enterobacterales</taxon>
        <taxon>Enterobacteriaceae</taxon>
        <taxon>Escherichia</taxon>
    </lineage>
</organism>